<keyword id="KW-0030">Aminoacyl-tRNA synthetase</keyword>
<keyword id="KW-0067">ATP-binding</keyword>
<keyword id="KW-0963">Cytoplasm</keyword>
<keyword id="KW-0436">Ligase</keyword>
<keyword id="KW-0479">Metal-binding</keyword>
<keyword id="KW-0547">Nucleotide-binding</keyword>
<keyword id="KW-0648">Protein biosynthesis</keyword>
<keyword id="KW-1185">Reference proteome</keyword>
<keyword id="KW-0862">Zinc</keyword>
<feature type="chain" id="PRO_0000098577" description="Isoleucine--tRNA ligase">
    <location>
        <begin position="1"/>
        <end position="1070"/>
    </location>
</feature>
<feature type="short sequence motif" description="'HIGH' region">
    <location>
        <begin position="50"/>
        <end position="60"/>
    </location>
</feature>
<feature type="short sequence motif" description="'KMSKS' region">
    <location>
        <begin position="606"/>
        <end position="610"/>
    </location>
</feature>
<feature type="binding site" evidence="1">
    <location>
        <position position="609"/>
    </location>
    <ligand>
        <name>ATP</name>
        <dbReference type="ChEBI" id="CHEBI:30616"/>
    </ligand>
</feature>
<accession>Q9HN97</accession>
<organism>
    <name type="scientific">Halobacterium salinarum (strain ATCC 700922 / JCM 11081 / NRC-1)</name>
    <name type="common">Halobacterium halobium</name>
    <dbReference type="NCBI Taxonomy" id="64091"/>
    <lineage>
        <taxon>Archaea</taxon>
        <taxon>Methanobacteriati</taxon>
        <taxon>Methanobacteriota</taxon>
        <taxon>Stenosarchaea group</taxon>
        <taxon>Halobacteria</taxon>
        <taxon>Halobacteriales</taxon>
        <taxon>Halobacteriaceae</taxon>
        <taxon>Halobacterium</taxon>
        <taxon>Halobacterium salinarum NRC-34001</taxon>
    </lineage>
</organism>
<name>SYI_HALSA</name>
<gene>
    <name evidence="1" type="primary">ileS</name>
    <name type="ordered locus">VNG_2190G</name>
</gene>
<dbReference type="EC" id="6.1.1.5" evidence="1"/>
<dbReference type="EMBL" id="AE004437">
    <property type="protein sequence ID" value="AAG20324.1"/>
    <property type="molecule type" value="Genomic_DNA"/>
</dbReference>
<dbReference type="PIR" id="H84369">
    <property type="entry name" value="H84369"/>
</dbReference>
<dbReference type="RefSeq" id="WP_010903625.1">
    <property type="nucleotide sequence ID" value="NC_002607.1"/>
</dbReference>
<dbReference type="SMR" id="Q9HN97"/>
<dbReference type="FunCoup" id="Q9HN97">
    <property type="interactions" value="196"/>
</dbReference>
<dbReference type="STRING" id="64091.VNG_2190G"/>
<dbReference type="PaxDb" id="64091-VNG_2190G"/>
<dbReference type="GeneID" id="68694755"/>
<dbReference type="KEGG" id="hal:VNG_2190G"/>
<dbReference type="PATRIC" id="fig|64091.14.peg.1684"/>
<dbReference type="HOGENOM" id="CLU_001493_1_1_2"/>
<dbReference type="InParanoid" id="Q9HN97"/>
<dbReference type="OrthoDB" id="30823at2157"/>
<dbReference type="PhylomeDB" id="Q9HN97"/>
<dbReference type="Proteomes" id="UP000000554">
    <property type="component" value="Chromosome"/>
</dbReference>
<dbReference type="GO" id="GO:0005829">
    <property type="term" value="C:cytosol"/>
    <property type="evidence" value="ECO:0000318"/>
    <property type="project" value="GO_Central"/>
</dbReference>
<dbReference type="GO" id="GO:0002161">
    <property type="term" value="F:aminoacyl-tRNA deacylase activity"/>
    <property type="evidence" value="ECO:0007669"/>
    <property type="project" value="InterPro"/>
</dbReference>
<dbReference type="GO" id="GO:0005524">
    <property type="term" value="F:ATP binding"/>
    <property type="evidence" value="ECO:0007669"/>
    <property type="project" value="UniProtKB-UniRule"/>
</dbReference>
<dbReference type="GO" id="GO:0004822">
    <property type="term" value="F:isoleucine-tRNA ligase activity"/>
    <property type="evidence" value="ECO:0000318"/>
    <property type="project" value="GO_Central"/>
</dbReference>
<dbReference type="GO" id="GO:0000049">
    <property type="term" value="F:tRNA binding"/>
    <property type="evidence" value="ECO:0007669"/>
    <property type="project" value="InterPro"/>
</dbReference>
<dbReference type="GO" id="GO:0008270">
    <property type="term" value="F:zinc ion binding"/>
    <property type="evidence" value="ECO:0007669"/>
    <property type="project" value="UniProtKB-UniRule"/>
</dbReference>
<dbReference type="GO" id="GO:0006428">
    <property type="term" value="P:isoleucyl-tRNA aminoacylation"/>
    <property type="evidence" value="ECO:0000318"/>
    <property type="project" value="GO_Central"/>
</dbReference>
<dbReference type="CDD" id="cd07961">
    <property type="entry name" value="Anticodon_Ia_Ile_ABEc"/>
    <property type="match status" value="1"/>
</dbReference>
<dbReference type="CDD" id="cd00818">
    <property type="entry name" value="IleRS_core"/>
    <property type="match status" value="1"/>
</dbReference>
<dbReference type="FunFam" id="3.40.50.620:FF:000286">
    <property type="entry name" value="Isoleucine--tRNA ligase"/>
    <property type="match status" value="1"/>
</dbReference>
<dbReference type="Gene3D" id="3.40.50.620">
    <property type="entry name" value="HUPs"/>
    <property type="match status" value="2"/>
</dbReference>
<dbReference type="Gene3D" id="1.10.730.10">
    <property type="entry name" value="Isoleucyl-tRNA Synthetase, Domain 1"/>
    <property type="match status" value="1"/>
</dbReference>
<dbReference type="Gene3D" id="3.90.740.10">
    <property type="entry name" value="Valyl/Leucyl/Isoleucyl-tRNA synthetase, editing domain"/>
    <property type="match status" value="1"/>
</dbReference>
<dbReference type="HAMAP" id="MF_02003">
    <property type="entry name" value="Ile_tRNA_synth_type2"/>
    <property type="match status" value="1"/>
</dbReference>
<dbReference type="InterPro" id="IPR002300">
    <property type="entry name" value="aa-tRNA-synth_Ia"/>
</dbReference>
<dbReference type="InterPro" id="IPR033709">
    <property type="entry name" value="Anticodon_Ile_ABEc"/>
</dbReference>
<dbReference type="InterPro" id="IPR002301">
    <property type="entry name" value="Ile-tRNA-ligase"/>
</dbReference>
<dbReference type="InterPro" id="IPR023586">
    <property type="entry name" value="Ile-tRNA-ligase_type2"/>
</dbReference>
<dbReference type="InterPro" id="IPR013155">
    <property type="entry name" value="M/V/L/I-tRNA-synth_anticd-bd"/>
</dbReference>
<dbReference type="InterPro" id="IPR014729">
    <property type="entry name" value="Rossmann-like_a/b/a_fold"/>
</dbReference>
<dbReference type="InterPro" id="IPR009080">
    <property type="entry name" value="tRNAsynth_Ia_anticodon-bd"/>
</dbReference>
<dbReference type="InterPro" id="IPR009008">
    <property type="entry name" value="Val/Leu/Ile-tRNA-synth_edit"/>
</dbReference>
<dbReference type="NCBIfam" id="TIGR00392">
    <property type="entry name" value="ileS"/>
    <property type="match status" value="1"/>
</dbReference>
<dbReference type="PANTHER" id="PTHR42780:SF1">
    <property type="entry name" value="ISOLEUCINE--TRNA LIGASE, CYTOPLASMIC"/>
    <property type="match status" value="1"/>
</dbReference>
<dbReference type="PANTHER" id="PTHR42780">
    <property type="entry name" value="SOLEUCYL-TRNA SYNTHETASE"/>
    <property type="match status" value="1"/>
</dbReference>
<dbReference type="Pfam" id="PF08264">
    <property type="entry name" value="Anticodon_1"/>
    <property type="match status" value="1"/>
</dbReference>
<dbReference type="Pfam" id="PF19302">
    <property type="entry name" value="DUF5915"/>
    <property type="match status" value="1"/>
</dbReference>
<dbReference type="Pfam" id="PF00133">
    <property type="entry name" value="tRNA-synt_1"/>
    <property type="match status" value="1"/>
</dbReference>
<dbReference type="PRINTS" id="PR00984">
    <property type="entry name" value="TRNASYNTHILE"/>
</dbReference>
<dbReference type="SUPFAM" id="SSF47323">
    <property type="entry name" value="Anticodon-binding domain of a subclass of class I aminoacyl-tRNA synthetases"/>
    <property type="match status" value="2"/>
</dbReference>
<dbReference type="SUPFAM" id="SSF52374">
    <property type="entry name" value="Nucleotidylyl transferase"/>
    <property type="match status" value="1"/>
</dbReference>
<dbReference type="SUPFAM" id="SSF50677">
    <property type="entry name" value="ValRS/IleRS/LeuRS editing domain"/>
    <property type="match status" value="1"/>
</dbReference>
<comment type="function">
    <text evidence="1">Catalyzes the attachment of isoleucine to tRNA(Ile). As IleRS can inadvertently accommodate and process structurally similar amino acids such as valine, to avoid such errors it has two additional distinct tRNA(Ile)-dependent editing activities. One activity is designated as 'pretransfer' editing and involves the hydrolysis of activated Val-AMP. The other activity is designated 'posttransfer' editing and involves deacylation of mischarged Val-tRNA(Ile).</text>
</comment>
<comment type="catalytic activity">
    <reaction evidence="1">
        <text>tRNA(Ile) + L-isoleucine + ATP = L-isoleucyl-tRNA(Ile) + AMP + diphosphate</text>
        <dbReference type="Rhea" id="RHEA:11060"/>
        <dbReference type="Rhea" id="RHEA-COMP:9666"/>
        <dbReference type="Rhea" id="RHEA-COMP:9695"/>
        <dbReference type="ChEBI" id="CHEBI:30616"/>
        <dbReference type="ChEBI" id="CHEBI:33019"/>
        <dbReference type="ChEBI" id="CHEBI:58045"/>
        <dbReference type="ChEBI" id="CHEBI:78442"/>
        <dbReference type="ChEBI" id="CHEBI:78528"/>
        <dbReference type="ChEBI" id="CHEBI:456215"/>
        <dbReference type="EC" id="6.1.1.5"/>
    </reaction>
</comment>
<comment type="cofactor">
    <cofactor evidence="1">
        <name>Zn(2+)</name>
        <dbReference type="ChEBI" id="CHEBI:29105"/>
    </cofactor>
</comment>
<comment type="subunit">
    <text evidence="1">Monomer.</text>
</comment>
<comment type="subcellular location">
    <subcellularLocation>
        <location evidence="1">Cytoplasm</location>
    </subcellularLocation>
</comment>
<comment type="domain">
    <text evidence="1">IleRS has two distinct active sites: one for aminoacylation and one for editing. The misactivated valine is translocated from the active site to the editing site, which sterically excludes the correctly activated isoleucine. The single editing site contains two valyl binding pockets, one specific for each substrate (Val-AMP or Val-tRNA(Ile)).</text>
</comment>
<comment type="similarity">
    <text evidence="1">Belongs to the class-I aminoacyl-tRNA synthetase family. IleS type 2 subfamily.</text>
</comment>
<sequence>MSGFGDVPDQYDPAGVEERVFSYWEAVDAYEQTVDHRADAETFFFVDGPPYTSGAAHMGTTWNKTLKDAYIRYHRMQGYDVTDRPGYDMHGLPIETKVEEQLGFESKKDIQEFGEEAFIEECKRFADDNLDGLQSDFQSFGVWMDWDNPYKTVDPSYMEAAWWAFSEVHDNGLVERGQRSISQCPRCETAIANNEVEYEDVTDPSIYVRFDLDDREGSLVVWTTTPWTIPANQFVAVDEDGDYQQVRATTPDGETDVLYVASECVEDVLSAGGYSDHEIVADHSGSDLIGWSYTPPLADAVPANPTDADGTHEVYHGDWVEADRTGLVHSAPGHGEEDFERGAELDLPVFCPVGEDGVYTDAGGKYAGAFVRDANDDIIADLEARDAMLASQTVEHSYGHCWRCDTGIIQIVTDQWFITITDVKDELLANMDTSEWHPEWARDNRFRDFVENAPDWNVSRQRYWGIPVPIWTPEDWSGDAEDVLVVGTREELAALADQDVDPASVDLHKPTVDDITITEDGTEYTRVPDVFDVWLDSSVASWGTLNYPEQEDDFDELWPADLIMEAHDQTRGWFWSQLGMGTAALGDVPYEEVLMHGYANMPDGRGMSKSKGITIEPNEVIDEYGADPMRMFLLSVTPQGDDMSFSWDETENMQRDLNILWNVFRFPRPYMALDDFDANVPAAFGGDDAGVGIADADLETVDEWLLSRLQHVKADATAHWEDFEQHRALDAVLEFVVEDLSRYYVQVVRERMWEDDASASKTAAYATMQRVLLEVVALLAPYAPFVTEELYSHLTGDRGYDTVHMADWPTVEESLRAPALEADVAVLRAAEEAGSHARQQAGRKLRWPVTRVVVDAAEDSVVDALDAHGDLLADRLNTRAIEVVEPGAAWDELAYSARADMSELGPAFGDDAGAVMNALNDARVTDRDIDALAEQVAADLGRDDIELTTEMVEFVEETPEHVAGAAFETETAAGTVYVDTELNEDVESEGYAREVVRRVQEMRKEMDLAMDAEIRLDVLVFDERVGELVARHEPLITAETRARELGEVEDGHREEWDVEGTTMILEVEAV</sequence>
<proteinExistence type="inferred from homology"/>
<protein>
    <recommendedName>
        <fullName evidence="1">Isoleucine--tRNA ligase</fullName>
        <ecNumber evidence="1">6.1.1.5</ecNumber>
    </recommendedName>
    <alternativeName>
        <fullName evidence="1">Isoleucyl-tRNA synthetase</fullName>
        <shortName evidence="1">IleRS</shortName>
    </alternativeName>
</protein>
<reference key="1">
    <citation type="journal article" date="2000" name="Proc. Natl. Acad. Sci. U.S.A.">
        <title>Genome sequence of Halobacterium species NRC-1.</title>
        <authorList>
            <person name="Ng W.V."/>
            <person name="Kennedy S.P."/>
            <person name="Mahairas G.G."/>
            <person name="Berquist B."/>
            <person name="Pan M."/>
            <person name="Shukla H.D."/>
            <person name="Lasky S.R."/>
            <person name="Baliga N.S."/>
            <person name="Thorsson V."/>
            <person name="Sbrogna J."/>
            <person name="Swartzell S."/>
            <person name="Weir D."/>
            <person name="Hall J."/>
            <person name="Dahl T.A."/>
            <person name="Welti R."/>
            <person name="Goo Y.A."/>
            <person name="Leithauser B."/>
            <person name="Keller K."/>
            <person name="Cruz R."/>
            <person name="Danson M.J."/>
            <person name="Hough D.W."/>
            <person name="Maddocks D.G."/>
            <person name="Jablonski P.E."/>
            <person name="Krebs M.P."/>
            <person name="Angevine C.M."/>
            <person name="Dale H."/>
            <person name="Isenbarger T.A."/>
            <person name="Peck R.F."/>
            <person name="Pohlschroder M."/>
            <person name="Spudich J.L."/>
            <person name="Jung K.-H."/>
            <person name="Alam M."/>
            <person name="Freitas T."/>
            <person name="Hou S."/>
            <person name="Daniels C.J."/>
            <person name="Dennis P.P."/>
            <person name="Omer A.D."/>
            <person name="Ebhardt H."/>
            <person name="Lowe T.M."/>
            <person name="Liang P."/>
            <person name="Riley M."/>
            <person name="Hood L."/>
            <person name="DasSarma S."/>
        </authorList>
    </citation>
    <scope>NUCLEOTIDE SEQUENCE [LARGE SCALE GENOMIC DNA]</scope>
    <source>
        <strain>ATCC 700922 / JCM 11081 / NRC-1</strain>
    </source>
</reference>
<evidence type="ECO:0000255" key="1">
    <source>
        <dbReference type="HAMAP-Rule" id="MF_02003"/>
    </source>
</evidence>